<feature type="chain" id="PRO_1000213271" description="ATP phosphoribosyltransferase">
    <location>
        <begin position="1"/>
        <end position="214"/>
    </location>
</feature>
<keyword id="KW-0028">Amino-acid biosynthesis</keyword>
<keyword id="KW-0067">ATP-binding</keyword>
<keyword id="KW-0963">Cytoplasm</keyword>
<keyword id="KW-0328">Glycosyltransferase</keyword>
<keyword id="KW-0368">Histidine biosynthesis</keyword>
<keyword id="KW-0547">Nucleotide-binding</keyword>
<keyword id="KW-1185">Reference proteome</keyword>
<keyword id="KW-0808">Transferase</keyword>
<evidence type="ECO:0000255" key="1">
    <source>
        <dbReference type="HAMAP-Rule" id="MF_01018"/>
    </source>
</evidence>
<sequence>MITLALSKGRIFEETLPLLAAAGIEVTEDPEKSRKLILPTNRADMQVVMVRATDVPTYVQYGGADLGVAGKDILIEHGGEGLYQPIDLRIARCRMSVATRADFDYDSAVKKGSRIRVATKYTAIARQHFADKGVHVDLIKLYGSMELAPLTGLADAIVDLVSTGSTLKANHLREVEPFMEISSRLVVNQAALKLKRERLRPLIDAIAAAVAARG</sequence>
<gene>
    <name evidence="1" type="primary">hisG</name>
    <name type="ordered locus">Lcho_1586</name>
</gene>
<dbReference type="EC" id="2.4.2.17" evidence="1"/>
<dbReference type="EMBL" id="CP001013">
    <property type="protein sequence ID" value="ACB33853.1"/>
    <property type="molecule type" value="Genomic_DNA"/>
</dbReference>
<dbReference type="RefSeq" id="WP_012346614.1">
    <property type="nucleotide sequence ID" value="NC_010524.1"/>
</dbReference>
<dbReference type="SMR" id="B1XX72"/>
<dbReference type="STRING" id="395495.Lcho_1586"/>
<dbReference type="KEGG" id="lch:Lcho_1586"/>
<dbReference type="eggNOG" id="COG0040">
    <property type="taxonomic scope" value="Bacteria"/>
</dbReference>
<dbReference type="HOGENOM" id="CLU_038115_2_0_4"/>
<dbReference type="OrthoDB" id="9801867at2"/>
<dbReference type="UniPathway" id="UPA00031">
    <property type="reaction ID" value="UER00006"/>
</dbReference>
<dbReference type="Proteomes" id="UP000001693">
    <property type="component" value="Chromosome"/>
</dbReference>
<dbReference type="GO" id="GO:0005737">
    <property type="term" value="C:cytoplasm"/>
    <property type="evidence" value="ECO:0007669"/>
    <property type="project" value="UniProtKB-SubCell"/>
</dbReference>
<dbReference type="GO" id="GO:0005524">
    <property type="term" value="F:ATP binding"/>
    <property type="evidence" value="ECO:0007669"/>
    <property type="project" value="UniProtKB-KW"/>
</dbReference>
<dbReference type="GO" id="GO:0003879">
    <property type="term" value="F:ATP phosphoribosyltransferase activity"/>
    <property type="evidence" value="ECO:0007669"/>
    <property type="project" value="UniProtKB-UniRule"/>
</dbReference>
<dbReference type="GO" id="GO:0000105">
    <property type="term" value="P:L-histidine biosynthetic process"/>
    <property type="evidence" value="ECO:0007669"/>
    <property type="project" value="UniProtKB-UniRule"/>
</dbReference>
<dbReference type="CDD" id="cd13595">
    <property type="entry name" value="PBP2_HisGs"/>
    <property type="match status" value="1"/>
</dbReference>
<dbReference type="FunFam" id="3.40.190.10:FF:000011">
    <property type="entry name" value="ATP phosphoribosyltransferase"/>
    <property type="match status" value="1"/>
</dbReference>
<dbReference type="Gene3D" id="3.40.190.10">
    <property type="entry name" value="Periplasmic binding protein-like II"/>
    <property type="match status" value="2"/>
</dbReference>
<dbReference type="HAMAP" id="MF_01018">
    <property type="entry name" value="HisG_Short"/>
    <property type="match status" value="1"/>
</dbReference>
<dbReference type="InterPro" id="IPR013820">
    <property type="entry name" value="ATP_PRibTrfase_cat"/>
</dbReference>
<dbReference type="InterPro" id="IPR018198">
    <property type="entry name" value="ATP_PRibTrfase_CS"/>
</dbReference>
<dbReference type="InterPro" id="IPR001348">
    <property type="entry name" value="ATP_PRibTrfase_HisG"/>
</dbReference>
<dbReference type="InterPro" id="IPR024893">
    <property type="entry name" value="ATP_PRibTrfase_HisG_short"/>
</dbReference>
<dbReference type="NCBIfam" id="TIGR00070">
    <property type="entry name" value="hisG"/>
    <property type="match status" value="1"/>
</dbReference>
<dbReference type="PANTHER" id="PTHR21403:SF8">
    <property type="entry name" value="ATP PHOSPHORIBOSYLTRANSFERASE"/>
    <property type="match status" value="1"/>
</dbReference>
<dbReference type="PANTHER" id="PTHR21403">
    <property type="entry name" value="ATP PHOSPHORIBOSYLTRANSFERASE ATP-PRTASE"/>
    <property type="match status" value="1"/>
</dbReference>
<dbReference type="Pfam" id="PF01634">
    <property type="entry name" value="HisG"/>
    <property type="match status" value="1"/>
</dbReference>
<dbReference type="SUPFAM" id="SSF53850">
    <property type="entry name" value="Periplasmic binding protein-like II"/>
    <property type="match status" value="1"/>
</dbReference>
<dbReference type="PROSITE" id="PS01316">
    <property type="entry name" value="ATP_P_PHORIBOSYLTR"/>
    <property type="match status" value="1"/>
</dbReference>
<accession>B1XX72</accession>
<protein>
    <recommendedName>
        <fullName evidence="1">ATP phosphoribosyltransferase</fullName>
        <shortName evidence="1">ATP-PRT</shortName>
        <shortName evidence="1">ATP-PRTase</shortName>
        <ecNumber evidence="1">2.4.2.17</ecNumber>
    </recommendedName>
</protein>
<organism>
    <name type="scientific">Leptothrix cholodnii (strain ATCC 51168 / LMG 8142 / SP-6)</name>
    <name type="common">Leptothrix discophora (strain SP-6)</name>
    <dbReference type="NCBI Taxonomy" id="395495"/>
    <lineage>
        <taxon>Bacteria</taxon>
        <taxon>Pseudomonadati</taxon>
        <taxon>Pseudomonadota</taxon>
        <taxon>Betaproteobacteria</taxon>
        <taxon>Burkholderiales</taxon>
        <taxon>Sphaerotilaceae</taxon>
        <taxon>Leptothrix</taxon>
    </lineage>
</organism>
<comment type="function">
    <text evidence="1">Catalyzes the condensation of ATP and 5-phosphoribose 1-diphosphate to form N'-(5'-phosphoribosyl)-ATP (PR-ATP). Has a crucial role in the pathway because the rate of histidine biosynthesis seems to be controlled primarily by regulation of HisG enzymatic activity.</text>
</comment>
<comment type="catalytic activity">
    <reaction evidence="1">
        <text>1-(5-phospho-beta-D-ribosyl)-ATP + diphosphate = 5-phospho-alpha-D-ribose 1-diphosphate + ATP</text>
        <dbReference type="Rhea" id="RHEA:18473"/>
        <dbReference type="ChEBI" id="CHEBI:30616"/>
        <dbReference type="ChEBI" id="CHEBI:33019"/>
        <dbReference type="ChEBI" id="CHEBI:58017"/>
        <dbReference type="ChEBI" id="CHEBI:73183"/>
        <dbReference type="EC" id="2.4.2.17"/>
    </reaction>
</comment>
<comment type="pathway">
    <text evidence="1">Amino-acid biosynthesis; L-histidine biosynthesis; L-histidine from 5-phospho-alpha-D-ribose 1-diphosphate: step 1/9.</text>
</comment>
<comment type="subunit">
    <text evidence="1">Heteromultimer composed of HisG and HisZ subunits.</text>
</comment>
<comment type="subcellular location">
    <subcellularLocation>
        <location evidence="1">Cytoplasm</location>
    </subcellularLocation>
</comment>
<comment type="domain">
    <text>Lacks the C-terminal regulatory region which is replaced by HisZ.</text>
</comment>
<comment type="similarity">
    <text evidence="1">Belongs to the ATP phosphoribosyltransferase family. Short subfamily.</text>
</comment>
<proteinExistence type="inferred from homology"/>
<name>HIS1_LEPCP</name>
<reference key="1">
    <citation type="submission" date="2008-03" db="EMBL/GenBank/DDBJ databases">
        <title>Complete sequence of Leptothrix cholodnii SP-6.</title>
        <authorList>
            <consortium name="US DOE Joint Genome Institute"/>
            <person name="Copeland A."/>
            <person name="Lucas S."/>
            <person name="Lapidus A."/>
            <person name="Glavina del Rio T."/>
            <person name="Dalin E."/>
            <person name="Tice H."/>
            <person name="Bruce D."/>
            <person name="Goodwin L."/>
            <person name="Pitluck S."/>
            <person name="Chertkov O."/>
            <person name="Brettin T."/>
            <person name="Detter J.C."/>
            <person name="Han C."/>
            <person name="Kuske C.R."/>
            <person name="Schmutz J."/>
            <person name="Larimer F."/>
            <person name="Land M."/>
            <person name="Hauser L."/>
            <person name="Kyrpides N."/>
            <person name="Lykidis A."/>
            <person name="Emerson D."/>
            <person name="Richardson P."/>
        </authorList>
    </citation>
    <scope>NUCLEOTIDE SEQUENCE [LARGE SCALE GENOMIC DNA]</scope>
    <source>
        <strain>ATCC 51168 / LMG 8142 / SP-6</strain>
    </source>
</reference>